<accession>A6VN44</accession>
<dbReference type="EC" id="2.7.7.6" evidence="1"/>
<dbReference type="EMBL" id="CP000746">
    <property type="protein sequence ID" value="ABR74391.1"/>
    <property type="molecule type" value="Genomic_DNA"/>
</dbReference>
<dbReference type="RefSeq" id="WP_012072768.1">
    <property type="nucleotide sequence ID" value="NC_009655.1"/>
</dbReference>
<dbReference type="SMR" id="A6VN44"/>
<dbReference type="STRING" id="339671.Asuc_1025"/>
<dbReference type="KEGG" id="asu:Asuc_1025"/>
<dbReference type="eggNOG" id="COG1758">
    <property type="taxonomic scope" value="Bacteria"/>
</dbReference>
<dbReference type="HOGENOM" id="CLU_125406_5_3_6"/>
<dbReference type="OrthoDB" id="9796300at2"/>
<dbReference type="Proteomes" id="UP000001114">
    <property type="component" value="Chromosome"/>
</dbReference>
<dbReference type="GO" id="GO:0000428">
    <property type="term" value="C:DNA-directed RNA polymerase complex"/>
    <property type="evidence" value="ECO:0007669"/>
    <property type="project" value="UniProtKB-KW"/>
</dbReference>
<dbReference type="GO" id="GO:0003677">
    <property type="term" value="F:DNA binding"/>
    <property type="evidence" value="ECO:0007669"/>
    <property type="project" value="UniProtKB-UniRule"/>
</dbReference>
<dbReference type="GO" id="GO:0003899">
    <property type="term" value="F:DNA-directed RNA polymerase activity"/>
    <property type="evidence" value="ECO:0007669"/>
    <property type="project" value="UniProtKB-UniRule"/>
</dbReference>
<dbReference type="GO" id="GO:0006351">
    <property type="term" value="P:DNA-templated transcription"/>
    <property type="evidence" value="ECO:0007669"/>
    <property type="project" value="UniProtKB-UniRule"/>
</dbReference>
<dbReference type="Gene3D" id="3.90.940.10">
    <property type="match status" value="1"/>
</dbReference>
<dbReference type="HAMAP" id="MF_00366">
    <property type="entry name" value="RNApol_bact_RpoZ"/>
    <property type="match status" value="1"/>
</dbReference>
<dbReference type="InterPro" id="IPR003716">
    <property type="entry name" value="DNA-dir_RNA_pol_omega"/>
</dbReference>
<dbReference type="InterPro" id="IPR006110">
    <property type="entry name" value="Pol_omega/Rpo6/RPB6"/>
</dbReference>
<dbReference type="InterPro" id="IPR036161">
    <property type="entry name" value="RPB6/omega-like_sf"/>
</dbReference>
<dbReference type="NCBIfam" id="TIGR00690">
    <property type="entry name" value="rpoZ"/>
    <property type="match status" value="1"/>
</dbReference>
<dbReference type="PANTHER" id="PTHR34476">
    <property type="entry name" value="DNA-DIRECTED RNA POLYMERASE SUBUNIT OMEGA"/>
    <property type="match status" value="1"/>
</dbReference>
<dbReference type="PANTHER" id="PTHR34476:SF1">
    <property type="entry name" value="DNA-DIRECTED RNA POLYMERASE SUBUNIT OMEGA"/>
    <property type="match status" value="1"/>
</dbReference>
<dbReference type="Pfam" id="PF01192">
    <property type="entry name" value="RNA_pol_Rpb6"/>
    <property type="match status" value="1"/>
</dbReference>
<dbReference type="SMART" id="SM01409">
    <property type="entry name" value="RNA_pol_Rpb6"/>
    <property type="match status" value="1"/>
</dbReference>
<dbReference type="SUPFAM" id="SSF63562">
    <property type="entry name" value="RPB6/omega subunit-like"/>
    <property type="match status" value="1"/>
</dbReference>
<sequence>MARVTVQDAVEKIGNRFDLILTAARRARQLQLNHREPLVPEDNDKPTVIALREIEKGLINNDIMDAQERQDALMQHQAEDAAVSLLTA</sequence>
<feature type="chain" id="PRO_1000072102" description="DNA-directed RNA polymerase subunit omega">
    <location>
        <begin position="1"/>
        <end position="88"/>
    </location>
</feature>
<organism>
    <name type="scientific">Actinobacillus succinogenes (strain ATCC 55618 / DSM 22257 / CCUG 43843 / 130Z)</name>
    <dbReference type="NCBI Taxonomy" id="339671"/>
    <lineage>
        <taxon>Bacteria</taxon>
        <taxon>Pseudomonadati</taxon>
        <taxon>Pseudomonadota</taxon>
        <taxon>Gammaproteobacteria</taxon>
        <taxon>Pasteurellales</taxon>
        <taxon>Pasteurellaceae</taxon>
        <taxon>Actinobacillus</taxon>
    </lineage>
</organism>
<keyword id="KW-0240">DNA-directed RNA polymerase</keyword>
<keyword id="KW-0548">Nucleotidyltransferase</keyword>
<keyword id="KW-1185">Reference proteome</keyword>
<keyword id="KW-0804">Transcription</keyword>
<keyword id="KW-0808">Transferase</keyword>
<reference key="1">
    <citation type="journal article" date="2010" name="BMC Genomics">
        <title>A genomic perspective on the potential of Actinobacillus succinogenes for industrial succinate production.</title>
        <authorList>
            <person name="McKinlay J.B."/>
            <person name="Laivenieks M."/>
            <person name="Schindler B.D."/>
            <person name="McKinlay A.A."/>
            <person name="Siddaramappa S."/>
            <person name="Challacombe J.F."/>
            <person name="Lowry S.R."/>
            <person name="Clum A."/>
            <person name="Lapidus A.L."/>
            <person name="Burkhart K.B."/>
            <person name="Harkins V."/>
            <person name="Vieille C."/>
        </authorList>
    </citation>
    <scope>NUCLEOTIDE SEQUENCE [LARGE SCALE GENOMIC DNA]</scope>
    <source>
        <strain>ATCC 55618 / DSM 22257 / CCUG 43843 / 130Z</strain>
    </source>
</reference>
<proteinExistence type="inferred from homology"/>
<protein>
    <recommendedName>
        <fullName evidence="1">DNA-directed RNA polymerase subunit omega</fullName>
        <shortName evidence="1">RNAP omega subunit</shortName>
        <ecNumber evidence="1">2.7.7.6</ecNumber>
    </recommendedName>
    <alternativeName>
        <fullName evidence="1">RNA polymerase omega subunit</fullName>
    </alternativeName>
    <alternativeName>
        <fullName evidence="1">Transcriptase subunit omega</fullName>
    </alternativeName>
</protein>
<name>RPOZ_ACTSZ</name>
<comment type="function">
    <text evidence="1">Promotes RNA polymerase assembly. Latches the N- and C-terminal regions of the beta' subunit thereby facilitating its interaction with the beta and alpha subunits.</text>
</comment>
<comment type="catalytic activity">
    <reaction evidence="1">
        <text>RNA(n) + a ribonucleoside 5'-triphosphate = RNA(n+1) + diphosphate</text>
        <dbReference type="Rhea" id="RHEA:21248"/>
        <dbReference type="Rhea" id="RHEA-COMP:14527"/>
        <dbReference type="Rhea" id="RHEA-COMP:17342"/>
        <dbReference type="ChEBI" id="CHEBI:33019"/>
        <dbReference type="ChEBI" id="CHEBI:61557"/>
        <dbReference type="ChEBI" id="CHEBI:140395"/>
        <dbReference type="EC" id="2.7.7.6"/>
    </reaction>
</comment>
<comment type="subunit">
    <text evidence="1">The RNAP catalytic core consists of 2 alpha, 1 beta, 1 beta' and 1 omega subunit. When a sigma factor is associated with the core the holoenzyme is formed, which can initiate transcription.</text>
</comment>
<comment type="similarity">
    <text evidence="1">Belongs to the RNA polymerase subunit omega family.</text>
</comment>
<gene>
    <name evidence="1" type="primary">rpoZ</name>
    <name type="ordered locus">Asuc_1025</name>
</gene>
<evidence type="ECO:0000255" key="1">
    <source>
        <dbReference type="HAMAP-Rule" id="MF_00366"/>
    </source>
</evidence>